<comment type="function">
    <text evidence="1">Cell wall formation. Catalyzes the transfer of a GlcNAc subunit on undecaprenyl-pyrophosphoryl-MurNAc-pentapeptide (lipid intermediate I) to form undecaprenyl-pyrophosphoryl-MurNAc-(pentapeptide)GlcNAc (lipid intermediate II).</text>
</comment>
<comment type="catalytic activity">
    <reaction evidence="1">
        <text>di-trans,octa-cis-undecaprenyl diphospho-N-acetyl-alpha-D-muramoyl-L-alanyl-D-glutamyl-meso-2,6-diaminopimeloyl-D-alanyl-D-alanine + UDP-N-acetyl-alpha-D-glucosamine = di-trans,octa-cis-undecaprenyl diphospho-[N-acetyl-alpha-D-glucosaminyl-(1-&gt;4)]-N-acetyl-alpha-D-muramoyl-L-alanyl-D-glutamyl-meso-2,6-diaminopimeloyl-D-alanyl-D-alanine + UDP + H(+)</text>
        <dbReference type="Rhea" id="RHEA:31227"/>
        <dbReference type="ChEBI" id="CHEBI:15378"/>
        <dbReference type="ChEBI" id="CHEBI:57705"/>
        <dbReference type="ChEBI" id="CHEBI:58223"/>
        <dbReference type="ChEBI" id="CHEBI:61387"/>
        <dbReference type="ChEBI" id="CHEBI:61388"/>
        <dbReference type="EC" id="2.4.1.227"/>
    </reaction>
</comment>
<comment type="pathway">
    <text evidence="1">Cell wall biogenesis; peptidoglycan biosynthesis.</text>
</comment>
<comment type="subcellular location">
    <subcellularLocation>
        <location evidence="1">Cell membrane</location>
        <topology evidence="1">Peripheral membrane protein</topology>
        <orientation evidence="1">Cytoplasmic side</orientation>
    </subcellularLocation>
</comment>
<comment type="similarity">
    <text evidence="1">Belongs to the glycosyltransferase 28 family. MurG subfamily.</text>
</comment>
<gene>
    <name evidence="1" type="primary">murG</name>
    <name type="ordered locus">RoseRS_3786</name>
</gene>
<sequence length="439" mass="46854">MKQSRIPRDPDGLPPLRAWLVGGGTGGHVYPALAVAAALNAHGAQFVVADTDGGRNRAMSRHTRWSALYVGSVGGMEAALVARESALPFHALPAAAVRGRNPLTMVRNLITLARGTGAAHRLIARDRPAAILGTGGYVCVPVFLAARLACVPTVIYQPDVVPGLAVRLLARLANLVACSVADSGRYLGLTPVDFERAVPQLETQNRTVRLIVTGYPVRQELFHADRRACRAVFGLSDDLPTLLVAGGSRGARSINRAIAALLPSLLPLMEIIHVCGREGDATFLRAAIRVLPENLQKRYHLFEYLHSAPDISGQEGLPSTPTMIAALVAADLAVCRSGASILGELPAVGLPAVLAPYPYVHQDENADYLVQRGAAVKVSDAALADTTEKGSLFRAIYRLLNCPEERRAMAERARALAQPDAAQKLAFLLETLVIRRQTA</sequence>
<reference key="1">
    <citation type="submission" date="2007-04" db="EMBL/GenBank/DDBJ databases">
        <title>Complete sequence of Roseiflexus sp. RS-1.</title>
        <authorList>
            <consortium name="US DOE Joint Genome Institute"/>
            <person name="Copeland A."/>
            <person name="Lucas S."/>
            <person name="Lapidus A."/>
            <person name="Barry K."/>
            <person name="Detter J.C."/>
            <person name="Glavina del Rio T."/>
            <person name="Hammon N."/>
            <person name="Israni S."/>
            <person name="Dalin E."/>
            <person name="Tice H."/>
            <person name="Pitluck S."/>
            <person name="Chertkov O."/>
            <person name="Brettin T."/>
            <person name="Bruce D."/>
            <person name="Han C."/>
            <person name="Schmutz J."/>
            <person name="Larimer F."/>
            <person name="Land M."/>
            <person name="Hauser L."/>
            <person name="Kyrpides N."/>
            <person name="Mikhailova N."/>
            <person name="Bryant D.A."/>
            <person name="Richardson P."/>
        </authorList>
    </citation>
    <scope>NUCLEOTIDE SEQUENCE [LARGE SCALE GENOMIC DNA]</scope>
    <source>
        <strain>RS-1</strain>
    </source>
</reference>
<feature type="chain" id="PRO_0000315158" description="UDP-N-acetylglucosamine--N-acetylmuramyl-(pentapeptide) pyrophosphoryl-undecaprenol N-acetylglucosamine transferase">
    <location>
        <begin position="1"/>
        <end position="439"/>
    </location>
</feature>
<feature type="binding site" evidence="1">
    <location>
        <begin position="25"/>
        <end position="27"/>
    </location>
    <ligand>
        <name>UDP-N-acetyl-alpha-D-glucosamine</name>
        <dbReference type="ChEBI" id="CHEBI:57705"/>
    </ligand>
</feature>
<feature type="binding site" evidence="1">
    <location>
        <position position="218"/>
    </location>
    <ligand>
        <name>UDP-N-acetyl-alpha-D-glucosamine</name>
        <dbReference type="ChEBI" id="CHEBI:57705"/>
    </ligand>
</feature>
<feature type="binding site" evidence="1">
    <location>
        <position position="248"/>
    </location>
    <ligand>
        <name>UDP-N-acetyl-alpha-D-glucosamine</name>
        <dbReference type="ChEBI" id="CHEBI:57705"/>
    </ligand>
</feature>
<feature type="binding site" evidence="1">
    <location>
        <position position="362"/>
    </location>
    <ligand>
        <name>UDP-N-acetyl-alpha-D-glucosamine</name>
        <dbReference type="ChEBI" id="CHEBI:57705"/>
    </ligand>
</feature>
<evidence type="ECO:0000255" key="1">
    <source>
        <dbReference type="HAMAP-Rule" id="MF_00033"/>
    </source>
</evidence>
<keyword id="KW-0131">Cell cycle</keyword>
<keyword id="KW-0132">Cell division</keyword>
<keyword id="KW-1003">Cell membrane</keyword>
<keyword id="KW-0133">Cell shape</keyword>
<keyword id="KW-0961">Cell wall biogenesis/degradation</keyword>
<keyword id="KW-0328">Glycosyltransferase</keyword>
<keyword id="KW-0472">Membrane</keyword>
<keyword id="KW-0573">Peptidoglycan synthesis</keyword>
<keyword id="KW-0808">Transferase</keyword>
<dbReference type="EC" id="2.4.1.227" evidence="1"/>
<dbReference type="EMBL" id="CP000686">
    <property type="protein sequence ID" value="ABQ92140.1"/>
    <property type="molecule type" value="Genomic_DNA"/>
</dbReference>
<dbReference type="SMR" id="A5UZT7"/>
<dbReference type="STRING" id="357808.RoseRS_3786"/>
<dbReference type="CAZy" id="GT28">
    <property type="family name" value="Glycosyltransferase Family 28"/>
</dbReference>
<dbReference type="KEGG" id="rrs:RoseRS_3786"/>
<dbReference type="eggNOG" id="COG0707">
    <property type="taxonomic scope" value="Bacteria"/>
</dbReference>
<dbReference type="HOGENOM" id="CLU_037404_0_0_0"/>
<dbReference type="UniPathway" id="UPA00219"/>
<dbReference type="Proteomes" id="UP000006554">
    <property type="component" value="Chromosome"/>
</dbReference>
<dbReference type="GO" id="GO:0005886">
    <property type="term" value="C:plasma membrane"/>
    <property type="evidence" value="ECO:0007669"/>
    <property type="project" value="UniProtKB-SubCell"/>
</dbReference>
<dbReference type="GO" id="GO:0051991">
    <property type="term" value="F:UDP-N-acetyl-D-glucosamine:N-acetylmuramoyl-L-alanyl-D-glutamyl-meso-2,6-diaminopimelyl-D-alanyl-D-alanine-diphosphoundecaprenol 4-beta-N-acetylglucosaminlytransferase activity"/>
    <property type="evidence" value="ECO:0007669"/>
    <property type="project" value="RHEA"/>
</dbReference>
<dbReference type="GO" id="GO:0050511">
    <property type="term" value="F:undecaprenyldiphospho-muramoylpentapeptide beta-N-acetylglucosaminyltransferase activity"/>
    <property type="evidence" value="ECO:0007669"/>
    <property type="project" value="UniProtKB-UniRule"/>
</dbReference>
<dbReference type="GO" id="GO:0005975">
    <property type="term" value="P:carbohydrate metabolic process"/>
    <property type="evidence" value="ECO:0007669"/>
    <property type="project" value="InterPro"/>
</dbReference>
<dbReference type="GO" id="GO:0051301">
    <property type="term" value="P:cell division"/>
    <property type="evidence" value="ECO:0007669"/>
    <property type="project" value="UniProtKB-KW"/>
</dbReference>
<dbReference type="GO" id="GO:0071555">
    <property type="term" value="P:cell wall organization"/>
    <property type="evidence" value="ECO:0007669"/>
    <property type="project" value="UniProtKB-KW"/>
</dbReference>
<dbReference type="GO" id="GO:0030259">
    <property type="term" value="P:lipid glycosylation"/>
    <property type="evidence" value="ECO:0007669"/>
    <property type="project" value="UniProtKB-UniRule"/>
</dbReference>
<dbReference type="GO" id="GO:0009252">
    <property type="term" value="P:peptidoglycan biosynthetic process"/>
    <property type="evidence" value="ECO:0007669"/>
    <property type="project" value="UniProtKB-UniRule"/>
</dbReference>
<dbReference type="GO" id="GO:0008360">
    <property type="term" value="P:regulation of cell shape"/>
    <property type="evidence" value="ECO:0007669"/>
    <property type="project" value="UniProtKB-KW"/>
</dbReference>
<dbReference type="CDD" id="cd03785">
    <property type="entry name" value="GT28_MurG"/>
    <property type="match status" value="1"/>
</dbReference>
<dbReference type="Gene3D" id="3.40.50.2000">
    <property type="entry name" value="Glycogen Phosphorylase B"/>
    <property type="match status" value="2"/>
</dbReference>
<dbReference type="HAMAP" id="MF_00033">
    <property type="entry name" value="MurG"/>
    <property type="match status" value="1"/>
</dbReference>
<dbReference type="InterPro" id="IPR006009">
    <property type="entry name" value="GlcNAc_MurG"/>
</dbReference>
<dbReference type="InterPro" id="IPR007235">
    <property type="entry name" value="Glyco_trans_28_C"/>
</dbReference>
<dbReference type="InterPro" id="IPR004276">
    <property type="entry name" value="GlycoTrans_28_N"/>
</dbReference>
<dbReference type="PANTHER" id="PTHR21015:SF22">
    <property type="entry name" value="GLYCOSYLTRANSFERASE"/>
    <property type="match status" value="1"/>
</dbReference>
<dbReference type="PANTHER" id="PTHR21015">
    <property type="entry name" value="UDP-N-ACETYLGLUCOSAMINE--N-ACETYLMURAMYL-(PENTAPEPTIDE) PYROPHOSPHORYL-UNDECAPRENOL N-ACETYLGLUCOSAMINE TRANSFERASE 1"/>
    <property type="match status" value="1"/>
</dbReference>
<dbReference type="Pfam" id="PF04101">
    <property type="entry name" value="Glyco_tran_28_C"/>
    <property type="match status" value="1"/>
</dbReference>
<dbReference type="Pfam" id="PF03033">
    <property type="entry name" value="Glyco_transf_28"/>
    <property type="match status" value="1"/>
</dbReference>
<dbReference type="SUPFAM" id="SSF53756">
    <property type="entry name" value="UDP-Glycosyltransferase/glycogen phosphorylase"/>
    <property type="match status" value="1"/>
</dbReference>
<name>MURG_ROSS1</name>
<protein>
    <recommendedName>
        <fullName evidence="1">UDP-N-acetylglucosamine--N-acetylmuramyl-(pentapeptide) pyrophosphoryl-undecaprenol N-acetylglucosamine transferase</fullName>
        <ecNumber evidence="1">2.4.1.227</ecNumber>
    </recommendedName>
    <alternativeName>
        <fullName evidence="1">Undecaprenyl-PP-MurNAc-pentapeptide-UDPGlcNAc GlcNAc transferase</fullName>
    </alternativeName>
</protein>
<proteinExistence type="inferred from homology"/>
<accession>A5UZT7</accession>
<organism>
    <name type="scientific">Roseiflexus sp. (strain RS-1)</name>
    <dbReference type="NCBI Taxonomy" id="357808"/>
    <lineage>
        <taxon>Bacteria</taxon>
        <taxon>Bacillati</taxon>
        <taxon>Chloroflexota</taxon>
        <taxon>Chloroflexia</taxon>
        <taxon>Chloroflexales</taxon>
        <taxon>Roseiflexineae</taxon>
        <taxon>Roseiflexaceae</taxon>
        <taxon>Roseiflexus</taxon>
    </lineage>
</organism>